<protein>
    <recommendedName>
        <fullName evidence="1">Carbamoyl phosphate synthase large chain</fullName>
        <ecNumber evidence="1">6.3.4.16</ecNumber>
        <ecNumber evidence="1">6.3.5.5</ecNumber>
    </recommendedName>
    <alternativeName>
        <fullName evidence="1">Carbamoyl phosphate synthetase ammonia chain</fullName>
    </alternativeName>
</protein>
<organism>
    <name type="scientific">Methanosphaerula palustris (strain ATCC BAA-1556 / DSM 19958 / E1-9c)</name>
    <dbReference type="NCBI Taxonomy" id="521011"/>
    <lineage>
        <taxon>Archaea</taxon>
        <taxon>Methanobacteriati</taxon>
        <taxon>Methanobacteriota</taxon>
        <taxon>Stenosarchaea group</taxon>
        <taxon>Methanomicrobia</taxon>
        <taxon>Methanomicrobiales</taxon>
        <taxon>Methanoregulaceae</taxon>
        <taxon>Methanosphaerula</taxon>
    </lineage>
</organism>
<sequence length="1056" mass="115802">MPRRTDIKKVLLIGSGPIQIGQAAEFDFSGSQACKSLREEGIEVVLVNSNPATIQTDPETADTIYIEPLRASIIAKIIEKEKPDGILSGMGGQTGLNLTAELAELGALRNVEILGTPLEAIYQGEDREKFKALMQKIGEPVPRSMILNRLDQLGEVIEKVGLPVIIRPAYTLGGAGGGIAHTVDELKRIVEIGLQRSRIHQVLIEESVMGWKELEFEVMRDAKDTCVIICSMENVDPMGVHTGESVVVAPILTLRDDEYQMMRSASIKIIRALDVQGGCNIQFAFQDGDYRVIEVNPRVSRSSALASKATGYPIARVAAKIAIGMHLDEITNAVTGCTPASFEPSIDYVVVKVPRWPFDKFTRADRTLTTAMKSTGEVMAIGRTLEEGFKKALRSIDTDINTHTNHNEIRMILTSPTDERFGCIFDAFREGFTVDEIASLTSINPFFLHKMENIVKIERTLATEPTDLRIQEAAAAGFSMKEIAELTGRPVDEVRTAAGDPVYKMVDTCAAEFPATTPYYYSTHGVTTDIIQNDKKKVLILGSGPIRIGQGIEFDYCTVHAVKALREEGVEVHIVNNNPETVSTDFDTSDQLFFEPMQLEDVVNILKTDDYFGVMVQFGGQNAVNLALPLLQEIKKLGLPTAILGSSPDAMDIAEDRDRFSELLDALKIPSPPNSSAYSEEAALAMANKIGFPVLVRPSYVLGGRAMEIVHDNFELESYMKEAMRVSKSHPVLIDSFLQEAIELDVDAVCDGDEVLIGGIMEHIEEAGVHSGDSACVIPTQSLSDSVLARVREYTKKIAMGLGVVGLVNIQLAVKDDIVYVLEANPRASRTVPFVSKATGIPLAKVAAKVMIGKKLKDLGYKERTFRHVAVKEVLLPFNKLPGVDTVLGPEMKSTGEVMGIDYDFGRAYYKACISADNELPIEGNVFISVSTEQKEEVRRIAAQLRDLGLTLFGTKGTVETLMQAGIEANLVRKVQEGSPNVIDMVRKGEIRLIINTPVDKQSRLDHYQIMRAAVDYGIPYITTLQAARAAALAIDAIKREKITLEPISHYLSEVE</sequence>
<accession>B8GEA3</accession>
<feature type="chain" id="PRO_1000164713" description="Carbamoyl phosphate synthase large chain">
    <location>
        <begin position="1"/>
        <end position="1056"/>
    </location>
</feature>
<feature type="domain" description="ATP-grasp 1" evidence="1">
    <location>
        <begin position="131"/>
        <end position="323"/>
    </location>
</feature>
<feature type="domain" description="ATP-grasp 2" evidence="1">
    <location>
        <begin position="661"/>
        <end position="852"/>
    </location>
</feature>
<feature type="domain" description="MGS-like" evidence="1">
    <location>
        <begin position="918"/>
        <end position="1056"/>
    </location>
</feature>
<feature type="region of interest" description="Carboxyphosphate synthetic domain" evidence="1">
    <location>
        <begin position="1"/>
        <end position="397"/>
    </location>
</feature>
<feature type="region of interest" description="Oligomerization domain" evidence="1">
    <location>
        <begin position="398"/>
        <end position="530"/>
    </location>
</feature>
<feature type="region of interest" description="Carbamoyl phosphate synthetic domain" evidence="1">
    <location>
        <begin position="531"/>
        <end position="919"/>
    </location>
</feature>
<feature type="region of interest" description="Allosteric domain" evidence="1">
    <location>
        <begin position="920"/>
        <end position="1056"/>
    </location>
</feature>
<feature type="binding site" evidence="1">
    <location>
        <position position="127"/>
    </location>
    <ligand>
        <name>ATP</name>
        <dbReference type="ChEBI" id="CHEBI:30616"/>
        <label>1</label>
    </ligand>
</feature>
<feature type="binding site" evidence="1">
    <location>
        <position position="167"/>
    </location>
    <ligand>
        <name>ATP</name>
        <dbReference type="ChEBI" id="CHEBI:30616"/>
        <label>1</label>
    </ligand>
</feature>
<feature type="binding site" evidence="1">
    <location>
        <position position="173"/>
    </location>
    <ligand>
        <name>ATP</name>
        <dbReference type="ChEBI" id="CHEBI:30616"/>
        <label>1</label>
    </ligand>
</feature>
<feature type="binding site" evidence="1">
    <location>
        <position position="174"/>
    </location>
    <ligand>
        <name>ATP</name>
        <dbReference type="ChEBI" id="CHEBI:30616"/>
        <label>1</label>
    </ligand>
</feature>
<feature type="binding site" evidence="1">
    <location>
        <position position="206"/>
    </location>
    <ligand>
        <name>ATP</name>
        <dbReference type="ChEBI" id="CHEBI:30616"/>
        <label>1</label>
    </ligand>
</feature>
<feature type="binding site" evidence="1">
    <location>
        <position position="208"/>
    </location>
    <ligand>
        <name>ATP</name>
        <dbReference type="ChEBI" id="CHEBI:30616"/>
        <label>1</label>
    </ligand>
</feature>
<feature type="binding site" evidence="1">
    <location>
        <position position="213"/>
    </location>
    <ligand>
        <name>ATP</name>
        <dbReference type="ChEBI" id="CHEBI:30616"/>
        <label>1</label>
    </ligand>
</feature>
<feature type="binding site" evidence="1">
    <location>
        <position position="239"/>
    </location>
    <ligand>
        <name>ATP</name>
        <dbReference type="ChEBI" id="CHEBI:30616"/>
        <label>1</label>
    </ligand>
</feature>
<feature type="binding site" evidence="1">
    <location>
        <position position="240"/>
    </location>
    <ligand>
        <name>ATP</name>
        <dbReference type="ChEBI" id="CHEBI:30616"/>
        <label>1</label>
    </ligand>
</feature>
<feature type="binding site" evidence="1">
    <location>
        <position position="241"/>
    </location>
    <ligand>
        <name>ATP</name>
        <dbReference type="ChEBI" id="CHEBI:30616"/>
        <label>1</label>
    </ligand>
</feature>
<feature type="binding site" evidence="1">
    <location>
        <position position="282"/>
    </location>
    <ligand>
        <name>ATP</name>
        <dbReference type="ChEBI" id="CHEBI:30616"/>
        <label>1</label>
    </ligand>
</feature>
<feature type="binding site" evidence="1">
    <location>
        <position position="282"/>
    </location>
    <ligand>
        <name>Mg(2+)</name>
        <dbReference type="ChEBI" id="CHEBI:18420"/>
        <label>1</label>
    </ligand>
</feature>
<feature type="binding site" evidence="1">
    <location>
        <position position="282"/>
    </location>
    <ligand>
        <name>Mn(2+)</name>
        <dbReference type="ChEBI" id="CHEBI:29035"/>
        <label>1</label>
    </ligand>
</feature>
<feature type="binding site" evidence="1">
    <location>
        <position position="294"/>
    </location>
    <ligand>
        <name>ATP</name>
        <dbReference type="ChEBI" id="CHEBI:30616"/>
        <label>1</label>
    </ligand>
</feature>
<feature type="binding site" evidence="1">
    <location>
        <position position="294"/>
    </location>
    <ligand>
        <name>Mg(2+)</name>
        <dbReference type="ChEBI" id="CHEBI:18420"/>
        <label>1</label>
    </ligand>
</feature>
<feature type="binding site" evidence="1">
    <location>
        <position position="294"/>
    </location>
    <ligand>
        <name>Mg(2+)</name>
        <dbReference type="ChEBI" id="CHEBI:18420"/>
        <label>2</label>
    </ligand>
</feature>
<feature type="binding site" evidence="1">
    <location>
        <position position="294"/>
    </location>
    <ligand>
        <name>Mn(2+)</name>
        <dbReference type="ChEBI" id="CHEBI:29035"/>
        <label>1</label>
    </ligand>
</feature>
<feature type="binding site" evidence="1">
    <location>
        <position position="294"/>
    </location>
    <ligand>
        <name>Mn(2+)</name>
        <dbReference type="ChEBI" id="CHEBI:29035"/>
        <label>2</label>
    </ligand>
</feature>
<feature type="binding site" evidence="1">
    <location>
        <position position="296"/>
    </location>
    <ligand>
        <name>Mg(2+)</name>
        <dbReference type="ChEBI" id="CHEBI:18420"/>
        <label>2</label>
    </ligand>
</feature>
<feature type="binding site" evidence="1">
    <location>
        <position position="296"/>
    </location>
    <ligand>
        <name>Mn(2+)</name>
        <dbReference type="ChEBI" id="CHEBI:29035"/>
        <label>2</label>
    </ligand>
</feature>
<feature type="binding site" evidence="1">
    <location>
        <position position="697"/>
    </location>
    <ligand>
        <name>ATP</name>
        <dbReference type="ChEBI" id="CHEBI:30616"/>
        <label>2</label>
    </ligand>
</feature>
<feature type="binding site" evidence="1">
    <location>
        <position position="736"/>
    </location>
    <ligand>
        <name>ATP</name>
        <dbReference type="ChEBI" id="CHEBI:30616"/>
        <label>2</label>
    </ligand>
</feature>
<feature type="binding site" evidence="1">
    <location>
        <position position="738"/>
    </location>
    <ligand>
        <name>ATP</name>
        <dbReference type="ChEBI" id="CHEBI:30616"/>
        <label>2</label>
    </ligand>
</feature>
<feature type="binding site" evidence="1">
    <location>
        <position position="743"/>
    </location>
    <ligand>
        <name>ATP</name>
        <dbReference type="ChEBI" id="CHEBI:30616"/>
        <label>2</label>
    </ligand>
</feature>
<feature type="binding site" evidence="1">
    <location>
        <position position="768"/>
    </location>
    <ligand>
        <name>ATP</name>
        <dbReference type="ChEBI" id="CHEBI:30616"/>
        <label>2</label>
    </ligand>
</feature>
<feature type="binding site" evidence="1">
    <location>
        <position position="769"/>
    </location>
    <ligand>
        <name>ATP</name>
        <dbReference type="ChEBI" id="CHEBI:30616"/>
        <label>2</label>
    </ligand>
</feature>
<feature type="binding site" evidence="1">
    <location>
        <position position="770"/>
    </location>
    <ligand>
        <name>ATP</name>
        <dbReference type="ChEBI" id="CHEBI:30616"/>
        <label>2</label>
    </ligand>
</feature>
<feature type="binding site" evidence="1">
    <location>
        <position position="771"/>
    </location>
    <ligand>
        <name>ATP</name>
        <dbReference type="ChEBI" id="CHEBI:30616"/>
        <label>2</label>
    </ligand>
</feature>
<feature type="binding site" evidence="1">
    <location>
        <position position="811"/>
    </location>
    <ligand>
        <name>ATP</name>
        <dbReference type="ChEBI" id="CHEBI:30616"/>
        <label>2</label>
    </ligand>
</feature>
<feature type="binding site" evidence="1">
    <location>
        <position position="811"/>
    </location>
    <ligand>
        <name>Mg(2+)</name>
        <dbReference type="ChEBI" id="CHEBI:18420"/>
        <label>3</label>
    </ligand>
</feature>
<feature type="binding site" evidence="1">
    <location>
        <position position="811"/>
    </location>
    <ligand>
        <name>Mn(2+)</name>
        <dbReference type="ChEBI" id="CHEBI:29035"/>
        <label>3</label>
    </ligand>
</feature>
<feature type="binding site" evidence="1">
    <location>
        <position position="823"/>
    </location>
    <ligand>
        <name>ATP</name>
        <dbReference type="ChEBI" id="CHEBI:30616"/>
        <label>2</label>
    </ligand>
</feature>
<feature type="binding site" evidence="1">
    <location>
        <position position="823"/>
    </location>
    <ligand>
        <name>Mg(2+)</name>
        <dbReference type="ChEBI" id="CHEBI:18420"/>
        <label>3</label>
    </ligand>
</feature>
<feature type="binding site" evidence="1">
    <location>
        <position position="823"/>
    </location>
    <ligand>
        <name>Mg(2+)</name>
        <dbReference type="ChEBI" id="CHEBI:18420"/>
        <label>4</label>
    </ligand>
</feature>
<feature type="binding site" evidence="1">
    <location>
        <position position="823"/>
    </location>
    <ligand>
        <name>Mn(2+)</name>
        <dbReference type="ChEBI" id="CHEBI:29035"/>
        <label>3</label>
    </ligand>
</feature>
<feature type="binding site" evidence="1">
    <location>
        <position position="823"/>
    </location>
    <ligand>
        <name>Mn(2+)</name>
        <dbReference type="ChEBI" id="CHEBI:29035"/>
        <label>4</label>
    </ligand>
</feature>
<feature type="binding site" evidence="1">
    <location>
        <position position="825"/>
    </location>
    <ligand>
        <name>Mg(2+)</name>
        <dbReference type="ChEBI" id="CHEBI:18420"/>
        <label>4</label>
    </ligand>
</feature>
<feature type="binding site" evidence="1">
    <location>
        <position position="825"/>
    </location>
    <ligand>
        <name>Mn(2+)</name>
        <dbReference type="ChEBI" id="CHEBI:29035"/>
        <label>4</label>
    </ligand>
</feature>
<reference key="1">
    <citation type="journal article" date="2015" name="Genome Announc.">
        <title>Complete Genome Sequence of Methanosphaerula palustris E1-9CT, a Hydrogenotrophic Methanogen Isolated from a Minerotrophic Fen Peatland.</title>
        <authorList>
            <person name="Cadillo-Quiroz H."/>
            <person name="Browne P."/>
            <person name="Kyrpides N."/>
            <person name="Woyke T."/>
            <person name="Goodwin L."/>
            <person name="Detter C."/>
            <person name="Yavitt J.B."/>
            <person name="Zinder S.H."/>
        </authorList>
    </citation>
    <scope>NUCLEOTIDE SEQUENCE [LARGE SCALE GENOMIC DNA]</scope>
    <source>
        <strain>ATCC BAA-1556 / DSM 19958 / E1-9c</strain>
    </source>
</reference>
<dbReference type="EC" id="6.3.4.16" evidence="1"/>
<dbReference type="EC" id="6.3.5.5" evidence="1"/>
<dbReference type="EMBL" id="CP001338">
    <property type="protein sequence ID" value="ACL17604.1"/>
    <property type="molecule type" value="Genomic_DNA"/>
</dbReference>
<dbReference type="RefSeq" id="WP_012618923.1">
    <property type="nucleotide sequence ID" value="NC_011832.1"/>
</dbReference>
<dbReference type="SMR" id="B8GEA3"/>
<dbReference type="STRING" id="521011.Mpal_2319"/>
<dbReference type="GeneID" id="7270580"/>
<dbReference type="KEGG" id="mpl:Mpal_2319"/>
<dbReference type="eggNOG" id="arCOG01594">
    <property type="taxonomic scope" value="Archaea"/>
</dbReference>
<dbReference type="HOGENOM" id="CLU_000513_1_0_2"/>
<dbReference type="OrthoDB" id="85487at2157"/>
<dbReference type="UniPathway" id="UPA00068">
    <property type="reaction ID" value="UER00171"/>
</dbReference>
<dbReference type="UniPathway" id="UPA00070">
    <property type="reaction ID" value="UER00115"/>
</dbReference>
<dbReference type="Proteomes" id="UP000002457">
    <property type="component" value="Chromosome"/>
</dbReference>
<dbReference type="GO" id="GO:0005737">
    <property type="term" value="C:cytoplasm"/>
    <property type="evidence" value="ECO:0007669"/>
    <property type="project" value="TreeGrafter"/>
</dbReference>
<dbReference type="GO" id="GO:0005524">
    <property type="term" value="F:ATP binding"/>
    <property type="evidence" value="ECO:0007669"/>
    <property type="project" value="UniProtKB-UniRule"/>
</dbReference>
<dbReference type="GO" id="GO:0004087">
    <property type="term" value="F:carbamoyl-phosphate synthase (ammonia) activity"/>
    <property type="evidence" value="ECO:0007669"/>
    <property type="project" value="RHEA"/>
</dbReference>
<dbReference type="GO" id="GO:0004088">
    <property type="term" value="F:carbamoyl-phosphate synthase (glutamine-hydrolyzing) activity"/>
    <property type="evidence" value="ECO:0007669"/>
    <property type="project" value="UniProtKB-UniRule"/>
</dbReference>
<dbReference type="GO" id="GO:0046872">
    <property type="term" value="F:metal ion binding"/>
    <property type="evidence" value="ECO:0007669"/>
    <property type="project" value="UniProtKB-KW"/>
</dbReference>
<dbReference type="GO" id="GO:0044205">
    <property type="term" value="P:'de novo' UMP biosynthetic process"/>
    <property type="evidence" value="ECO:0007669"/>
    <property type="project" value="UniProtKB-UniRule"/>
</dbReference>
<dbReference type="GO" id="GO:0006541">
    <property type="term" value="P:glutamine metabolic process"/>
    <property type="evidence" value="ECO:0007669"/>
    <property type="project" value="TreeGrafter"/>
</dbReference>
<dbReference type="GO" id="GO:0006526">
    <property type="term" value="P:L-arginine biosynthetic process"/>
    <property type="evidence" value="ECO:0007669"/>
    <property type="project" value="UniProtKB-UniRule"/>
</dbReference>
<dbReference type="CDD" id="cd01424">
    <property type="entry name" value="MGS_CPS_II"/>
    <property type="match status" value="1"/>
</dbReference>
<dbReference type="FunFam" id="1.10.1030.10:FF:000002">
    <property type="entry name" value="Carbamoyl-phosphate synthase large chain"/>
    <property type="match status" value="1"/>
</dbReference>
<dbReference type="FunFam" id="3.30.1490.20:FF:000001">
    <property type="entry name" value="Carbamoyl-phosphate synthase large chain"/>
    <property type="match status" value="1"/>
</dbReference>
<dbReference type="FunFam" id="3.30.470.20:FF:000001">
    <property type="entry name" value="Carbamoyl-phosphate synthase large chain"/>
    <property type="match status" value="1"/>
</dbReference>
<dbReference type="FunFam" id="3.30.470.20:FF:000013">
    <property type="entry name" value="Carbamoyl-phosphate synthase large chain"/>
    <property type="match status" value="1"/>
</dbReference>
<dbReference type="FunFam" id="3.40.50.20:FF:000001">
    <property type="entry name" value="Carbamoyl-phosphate synthase large chain"/>
    <property type="match status" value="2"/>
</dbReference>
<dbReference type="Gene3D" id="3.40.50.20">
    <property type="match status" value="2"/>
</dbReference>
<dbReference type="Gene3D" id="3.30.1490.20">
    <property type="entry name" value="ATP-grasp fold, A domain"/>
    <property type="match status" value="1"/>
</dbReference>
<dbReference type="Gene3D" id="3.30.470.20">
    <property type="entry name" value="ATP-grasp fold, B domain"/>
    <property type="match status" value="2"/>
</dbReference>
<dbReference type="Gene3D" id="1.10.1030.10">
    <property type="entry name" value="Carbamoyl-phosphate synthetase, large subunit oligomerisation domain"/>
    <property type="match status" value="1"/>
</dbReference>
<dbReference type="Gene3D" id="3.40.50.1380">
    <property type="entry name" value="Methylglyoxal synthase-like domain"/>
    <property type="match status" value="1"/>
</dbReference>
<dbReference type="HAMAP" id="MF_01210_A">
    <property type="entry name" value="CPSase_L_chain_A"/>
    <property type="match status" value="1"/>
</dbReference>
<dbReference type="HAMAP" id="MF_01210_B">
    <property type="entry name" value="CPSase_L_chain_B"/>
    <property type="match status" value="1"/>
</dbReference>
<dbReference type="InterPro" id="IPR011761">
    <property type="entry name" value="ATP-grasp"/>
</dbReference>
<dbReference type="InterPro" id="IPR013815">
    <property type="entry name" value="ATP_grasp_subdomain_1"/>
</dbReference>
<dbReference type="InterPro" id="IPR006275">
    <property type="entry name" value="CarbamoylP_synth_lsu"/>
</dbReference>
<dbReference type="InterPro" id="IPR005480">
    <property type="entry name" value="CarbamoylP_synth_lsu_oligo"/>
</dbReference>
<dbReference type="InterPro" id="IPR036897">
    <property type="entry name" value="CarbamoylP_synth_lsu_oligo_sf"/>
</dbReference>
<dbReference type="InterPro" id="IPR005479">
    <property type="entry name" value="CbamoylP_synth_lsu-like_ATP-bd"/>
</dbReference>
<dbReference type="InterPro" id="IPR005483">
    <property type="entry name" value="CbamoylP_synth_lsu_CPSase_dom"/>
</dbReference>
<dbReference type="InterPro" id="IPR011607">
    <property type="entry name" value="MGS-like_dom"/>
</dbReference>
<dbReference type="InterPro" id="IPR036914">
    <property type="entry name" value="MGS-like_dom_sf"/>
</dbReference>
<dbReference type="InterPro" id="IPR033937">
    <property type="entry name" value="MGS_CPS_CarB"/>
</dbReference>
<dbReference type="InterPro" id="IPR016185">
    <property type="entry name" value="PreATP-grasp_dom_sf"/>
</dbReference>
<dbReference type="NCBIfam" id="TIGR01369">
    <property type="entry name" value="CPSaseII_lrg"/>
    <property type="match status" value="1"/>
</dbReference>
<dbReference type="NCBIfam" id="NF003671">
    <property type="entry name" value="PRK05294.1"/>
    <property type="match status" value="1"/>
</dbReference>
<dbReference type="NCBIfam" id="NF009455">
    <property type="entry name" value="PRK12815.1"/>
    <property type="match status" value="1"/>
</dbReference>
<dbReference type="PANTHER" id="PTHR11405:SF53">
    <property type="entry name" value="CARBAMOYL-PHOSPHATE SYNTHASE [AMMONIA], MITOCHONDRIAL"/>
    <property type="match status" value="1"/>
</dbReference>
<dbReference type="PANTHER" id="PTHR11405">
    <property type="entry name" value="CARBAMOYLTRANSFERASE FAMILY MEMBER"/>
    <property type="match status" value="1"/>
</dbReference>
<dbReference type="Pfam" id="PF02786">
    <property type="entry name" value="CPSase_L_D2"/>
    <property type="match status" value="2"/>
</dbReference>
<dbReference type="Pfam" id="PF02787">
    <property type="entry name" value="CPSase_L_D3"/>
    <property type="match status" value="1"/>
</dbReference>
<dbReference type="Pfam" id="PF02142">
    <property type="entry name" value="MGS"/>
    <property type="match status" value="1"/>
</dbReference>
<dbReference type="PRINTS" id="PR00098">
    <property type="entry name" value="CPSASE"/>
</dbReference>
<dbReference type="SMART" id="SM01096">
    <property type="entry name" value="CPSase_L_D3"/>
    <property type="match status" value="1"/>
</dbReference>
<dbReference type="SMART" id="SM00851">
    <property type="entry name" value="MGS"/>
    <property type="match status" value="1"/>
</dbReference>
<dbReference type="SUPFAM" id="SSF48108">
    <property type="entry name" value="Carbamoyl phosphate synthetase, large subunit connection domain"/>
    <property type="match status" value="1"/>
</dbReference>
<dbReference type="SUPFAM" id="SSF56059">
    <property type="entry name" value="Glutathione synthetase ATP-binding domain-like"/>
    <property type="match status" value="2"/>
</dbReference>
<dbReference type="SUPFAM" id="SSF52335">
    <property type="entry name" value="Methylglyoxal synthase-like"/>
    <property type="match status" value="1"/>
</dbReference>
<dbReference type="SUPFAM" id="SSF52440">
    <property type="entry name" value="PreATP-grasp domain"/>
    <property type="match status" value="2"/>
</dbReference>
<dbReference type="PROSITE" id="PS50975">
    <property type="entry name" value="ATP_GRASP"/>
    <property type="match status" value="2"/>
</dbReference>
<dbReference type="PROSITE" id="PS00866">
    <property type="entry name" value="CPSASE_1"/>
    <property type="match status" value="1"/>
</dbReference>
<dbReference type="PROSITE" id="PS00867">
    <property type="entry name" value="CPSASE_2"/>
    <property type="match status" value="2"/>
</dbReference>
<dbReference type="PROSITE" id="PS51855">
    <property type="entry name" value="MGS"/>
    <property type="match status" value="1"/>
</dbReference>
<gene>
    <name evidence="1" type="primary">carB</name>
    <name type="ordered locus">Mpal_2319</name>
</gene>
<evidence type="ECO:0000255" key="1">
    <source>
        <dbReference type="HAMAP-Rule" id="MF_01210"/>
    </source>
</evidence>
<keyword id="KW-0028">Amino-acid biosynthesis</keyword>
<keyword id="KW-0055">Arginine biosynthesis</keyword>
<keyword id="KW-0067">ATP-binding</keyword>
<keyword id="KW-0436">Ligase</keyword>
<keyword id="KW-0460">Magnesium</keyword>
<keyword id="KW-0464">Manganese</keyword>
<keyword id="KW-0479">Metal-binding</keyword>
<keyword id="KW-0547">Nucleotide-binding</keyword>
<keyword id="KW-0665">Pyrimidine biosynthesis</keyword>
<keyword id="KW-1185">Reference proteome</keyword>
<keyword id="KW-0677">Repeat</keyword>
<proteinExistence type="inferred from homology"/>
<name>CARB_METPE</name>
<comment type="function">
    <text evidence="1">Large subunit of the glutamine-dependent carbamoyl phosphate synthetase (CPSase). CPSase catalyzes the formation of carbamoyl phosphate from the ammonia moiety of glutamine, carbonate, and phosphate donated by ATP, constituting the first step of 2 biosynthetic pathways, one leading to arginine and/or urea and the other to pyrimidine nucleotides. The large subunit (synthetase) binds the substrates ammonia (free or transferred from glutamine from the small subunit), hydrogencarbonate and ATP and carries out an ATP-coupled ligase reaction, activating hydrogencarbonate by forming carboxy phosphate which reacts with ammonia to form carbamoyl phosphate.</text>
</comment>
<comment type="catalytic activity">
    <reaction evidence="1">
        <text>hydrogencarbonate + L-glutamine + 2 ATP + H2O = carbamoyl phosphate + L-glutamate + 2 ADP + phosphate + 2 H(+)</text>
        <dbReference type="Rhea" id="RHEA:18633"/>
        <dbReference type="ChEBI" id="CHEBI:15377"/>
        <dbReference type="ChEBI" id="CHEBI:15378"/>
        <dbReference type="ChEBI" id="CHEBI:17544"/>
        <dbReference type="ChEBI" id="CHEBI:29985"/>
        <dbReference type="ChEBI" id="CHEBI:30616"/>
        <dbReference type="ChEBI" id="CHEBI:43474"/>
        <dbReference type="ChEBI" id="CHEBI:58228"/>
        <dbReference type="ChEBI" id="CHEBI:58359"/>
        <dbReference type="ChEBI" id="CHEBI:456216"/>
        <dbReference type="EC" id="6.3.5.5"/>
    </reaction>
</comment>
<comment type="catalytic activity">
    <molecule>Carbamoyl phosphate synthase large chain</molecule>
    <reaction evidence="1">
        <text>hydrogencarbonate + NH4(+) + 2 ATP = carbamoyl phosphate + 2 ADP + phosphate + 2 H(+)</text>
        <dbReference type="Rhea" id="RHEA:18029"/>
        <dbReference type="ChEBI" id="CHEBI:15378"/>
        <dbReference type="ChEBI" id="CHEBI:17544"/>
        <dbReference type="ChEBI" id="CHEBI:28938"/>
        <dbReference type="ChEBI" id="CHEBI:30616"/>
        <dbReference type="ChEBI" id="CHEBI:43474"/>
        <dbReference type="ChEBI" id="CHEBI:58228"/>
        <dbReference type="ChEBI" id="CHEBI:456216"/>
        <dbReference type="EC" id="6.3.4.16"/>
    </reaction>
</comment>
<comment type="cofactor">
    <cofactor evidence="1">
        <name>Mg(2+)</name>
        <dbReference type="ChEBI" id="CHEBI:18420"/>
    </cofactor>
    <cofactor evidence="1">
        <name>Mn(2+)</name>
        <dbReference type="ChEBI" id="CHEBI:29035"/>
    </cofactor>
    <text evidence="1">Binds 4 Mg(2+) or Mn(2+) ions per subunit.</text>
</comment>
<comment type="pathway">
    <text evidence="1">Amino-acid biosynthesis; L-arginine biosynthesis; carbamoyl phosphate from bicarbonate: step 1/1.</text>
</comment>
<comment type="pathway">
    <text evidence="1">Pyrimidine metabolism; UMP biosynthesis via de novo pathway; (S)-dihydroorotate from bicarbonate: step 1/3.</text>
</comment>
<comment type="subunit">
    <text evidence="1">Composed of two chains; the small (or glutamine) chain promotes the hydrolysis of glutamine to ammonia, which is used by the large (or ammonia) chain to synthesize carbamoyl phosphate. Tetramer of heterodimers (alpha,beta)4.</text>
</comment>
<comment type="domain">
    <text evidence="1">The large subunit is composed of 2 ATP-grasp domains that are involved in binding the 2 ATP molecules needed for carbamoyl phosphate synthesis. The N-terminal ATP-grasp domain (referred to as the carboxyphosphate synthetic component) catalyzes the ATP-dependent phosphorylation of hydrogencarbonate to carboxyphosphate and the subsequent nucleophilic attack by ammonia to form a carbamate intermediate. The C-terminal ATP-grasp domain (referred to as the carbamoyl phosphate synthetic component) then catalyzes the phosphorylation of carbamate with the second ATP to form the end product carbamoyl phosphate. The reactive and unstable enzyme intermediates are sequentially channeled from one active site to the next through the interior of the protein over a distance of at least 96 A.</text>
</comment>
<comment type="similarity">
    <text evidence="1">Belongs to the CarB family.</text>
</comment>